<accession>Q83EQ3</accession>
<sequence>MARYLGPKCRLSRREKTDLQLKSGIRAIDSKCNIERIPGMHWQRRGRTTDYGVQLRMKQMIKRYYDVLEKQFANYYKQADRLKGSTGDNLLKLLESRLDNVVYRMGFAATRAEARQLISHKAILVNGEVVNIPSYQVKPGDIIEVRSRAKGQLRIKGALELAQQRAPISWIEVDTKKMTGTFKEQPDVAELPAEFKVNLVVELYSK</sequence>
<evidence type="ECO:0000255" key="1">
    <source>
        <dbReference type="HAMAP-Rule" id="MF_01306"/>
    </source>
</evidence>
<evidence type="ECO:0000305" key="2"/>
<organism>
    <name type="scientific">Coxiella burnetii (strain RSA 493 / Nine Mile phase I)</name>
    <dbReference type="NCBI Taxonomy" id="227377"/>
    <lineage>
        <taxon>Bacteria</taxon>
        <taxon>Pseudomonadati</taxon>
        <taxon>Pseudomonadota</taxon>
        <taxon>Gammaproteobacteria</taxon>
        <taxon>Legionellales</taxon>
        <taxon>Coxiellaceae</taxon>
        <taxon>Coxiella</taxon>
    </lineage>
</organism>
<name>RS4_COXBU</name>
<feature type="chain" id="PRO_0000132376" description="Small ribosomal subunit protein uS4">
    <location>
        <begin position="1"/>
        <end position="206"/>
    </location>
</feature>
<feature type="domain" description="S4 RNA-binding" evidence="1">
    <location>
        <begin position="96"/>
        <end position="158"/>
    </location>
</feature>
<comment type="function">
    <text evidence="1">One of the primary rRNA binding proteins, it binds directly to 16S rRNA where it nucleates assembly of the body of the 30S subunit.</text>
</comment>
<comment type="function">
    <text evidence="1">With S5 and S12 plays an important role in translational accuracy.</text>
</comment>
<comment type="subunit">
    <text evidence="1">Part of the 30S ribosomal subunit. Contacts protein S5. The interaction surface between S4 and S5 is involved in control of translational fidelity.</text>
</comment>
<comment type="similarity">
    <text evidence="1">Belongs to the universal ribosomal protein uS4 family.</text>
</comment>
<reference key="1">
    <citation type="journal article" date="2003" name="Proc. Natl. Acad. Sci. U.S.A.">
        <title>Complete genome sequence of the Q-fever pathogen, Coxiella burnetii.</title>
        <authorList>
            <person name="Seshadri R."/>
            <person name="Paulsen I.T."/>
            <person name="Eisen J.A."/>
            <person name="Read T.D."/>
            <person name="Nelson K.E."/>
            <person name="Nelson W.C."/>
            <person name="Ward N.L."/>
            <person name="Tettelin H."/>
            <person name="Davidsen T.M."/>
            <person name="Beanan M.J."/>
            <person name="DeBoy R.T."/>
            <person name="Daugherty S.C."/>
            <person name="Brinkac L.M."/>
            <person name="Madupu R."/>
            <person name="Dodson R.J."/>
            <person name="Khouri H.M."/>
            <person name="Lee K.H."/>
            <person name="Carty H.A."/>
            <person name="Scanlan D."/>
            <person name="Heinzen R.A."/>
            <person name="Thompson H.A."/>
            <person name="Samuel J.E."/>
            <person name="Fraser C.M."/>
            <person name="Heidelberg J.F."/>
        </authorList>
    </citation>
    <scope>NUCLEOTIDE SEQUENCE [LARGE SCALE GENOMIC DNA]</scope>
    <source>
        <strain>RSA 493 / Nine Mile phase I</strain>
    </source>
</reference>
<keyword id="KW-1185">Reference proteome</keyword>
<keyword id="KW-0687">Ribonucleoprotein</keyword>
<keyword id="KW-0689">Ribosomal protein</keyword>
<keyword id="KW-0694">RNA-binding</keyword>
<keyword id="KW-0699">rRNA-binding</keyword>
<protein>
    <recommendedName>
        <fullName evidence="1">Small ribosomal subunit protein uS4</fullName>
    </recommendedName>
    <alternativeName>
        <fullName evidence="2">30S ribosomal protein S4</fullName>
    </alternativeName>
</protein>
<dbReference type="EMBL" id="AE016828">
    <property type="protein sequence ID" value="AAO89820.1"/>
    <property type="molecule type" value="Genomic_DNA"/>
</dbReference>
<dbReference type="RefSeq" id="NP_819306.1">
    <property type="nucleotide sequence ID" value="NC_002971.4"/>
</dbReference>
<dbReference type="RefSeq" id="WP_010957468.1">
    <property type="nucleotide sequence ID" value="NZ_CCYB01000060.1"/>
</dbReference>
<dbReference type="SMR" id="Q83EQ3"/>
<dbReference type="STRING" id="227377.CBU_0262"/>
<dbReference type="DNASU" id="1208143"/>
<dbReference type="EnsemblBacteria" id="AAO89820">
    <property type="protein sequence ID" value="AAO89820"/>
    <property type="gene ID" value="CBU_0262"/>
</dbReference>
<dbReference type="GeneID" id="1208143"/>
<dbReference type="KEGG" id="cbu:CBU_0262"/>
<dbReference type="PATRIC" id="fig|227377.7.peg.257"/>
<dbReference type="eggNOG" id="COG0522">
    <property type="taxonomic scope" value="Bacteria"/>
</dbReference>
<dbReference type="HOGENOM" id="CLU_092403_0_2_6"/>
<dbReference type="OrthoDB" id="9803672at2"/>
<dbReference type="Proteomes" id="UP000002671">
    <property type="component" value="Chromosome"/>
</dbReference>
<dbReference type="GO" id="GO:0015935">
    <property type="term" value="C:small ribosomal subunit"/>
    <property type="evidence" value="ECO:0000318"/>
    <property type="project" value="GO_Central"/>
</dbReference>
<dbReference type="GO" id="GO:0019843">
    <property type="term" value="F:rRNA binding"/>
    <property type="evidence" value="ECO:0000318"/>
    <property type="project" value="GO_Central"/>
</dbReference>
<dbReference type="GO" id="GO:0003735">
    <property type="term" value="F:structural constituent of ribosome"/>
    <property type="evidence" value="ECO:0000318"/>
    <property type="project" value="GO_Central"/>
</dbReference>
<dbReference type="GO" id="GO:0042274">
    <property type="term" value="P:ribosomal small subunit biogenesis"/>
    <property type="evidence" value="ECO:0000318"/>
    <property type="project" value="GO_Central"/>
</dbReference>
<dbReference type="GO" id="GO:0006412">
    <property type="term" value="P:translation"/>
    <property type="evidence" value="ECO:0007669"/>
    <property type="project" value="UniProtKB-UniRule"/>
</dbReference>
<dbReference type="CDD" id="cd00165">
    <property type="entry name" value="S4"/>
    <property type="match status" value="1"/>
</dbReference>
<dbReference type="FunFam" id="1.10.1050.10:FF:000001">
    <property type="entry name" value="30S ribosomal protein S4"/>
    <property type="match status" value="1"/>
</dbReference>
<dbReference type="FunFam" id="3.10.290.10:FF:000001">
    <property type="entry name" value="30S ribosomal protein S4"/>
    <property type="match status" value="1"/>
</dbReference>
<dbReference type="Gene3D" id="1.10.1050.10">
    <property type="entry name" value="Ribosomal Protein S4 Delta 41, Chain A, domain 1"/>
    <property type="match status" value="1"/>
</dbReference>
<dbReference type="Gene3D" id="3.10.290.10">
    <property type="entry name" value="RNA-binding S4 domain"/>
    <property type="match status" value="1"/>
</dbReference>
<dbReference type="HAMAP" id="MF_01306_B">
    <property type="entry name" value="Ribosomal_uS4_B"/>
    <property type="match status" value="1"/>
</dbReference>
<dbReference type="InterPro" id="IPR022801">
    <property type="entry name" value="Ribosomal_uS4"/>
</dbReference>
<dbReference type="InterPro" id="IPR005709">
    <property type="entry name" value="Ribosomal_uS4_bac-type"/>
</dbReference>
<dbReference type="InterPro" id="IPR018079">
    <property type="entry name" value="Ribosomal_uS4_CS"/>
</dbReference>
<dbReference type="InterPro" id="IPR001912">
    <property type="entry name" value="Ribosomal_uS4_N"/>
</dbReference>
<dbReference type="InterPro" id="IPR002942">
    <property type="entry name" value="S4_RNA-bd"/>
</dbReference>
<dbReference type="InterPro" id="IPR036986">
    <property type="entry name" value="S4_RNA-bd_sf"/>
</dbReference>
<dbReference type="NCBIfam" id="NF003717">
    <property type="entry name" value="PRK05327.1"/>
    <property type="match status" value="1"/>
</dbReference>
<dbReference type="NCBIfam" id="TIGR01017">
    <property type="entry name" value="rpsD_bact"/>
    <property type="match status" value="1"/>
</dbReference>
<dbReference type="PANTHER" id="PTHR11831">
    <property type="entry name" value="30S 40S RIBOSOMAL PROTEIN"/>
    <property type="match status" value="1"/>
</dbReference>
<dbReference type="PANTHER" id="PTHR11831:SF4">
    <property type="entry name" value="SMALL RIBOSOMAL SUBUNIT PROTEIN US4M"/>
    <property type="match status" value="1"/>
</dbReference>
<dbReference type="Pfam" id="PF00163">
    <property type="entry name" value="Ribosomal_S4"/>
    <property type="match status" value="1"/>
</dbReference>
<dbReference type="Pfam" id="PF01479">
    <property type="entry name" value="S4"/>
    <property type="match status" value="1"/>
</dbReference>
<dbReference type="SMART" id="SM01390">
    <property type="entry name" value="Ribosomal_S4"/>
    <property type="match status" value="1"/>
</dbReference>
<dbReference type="SMART" id="SM00363">
    <property type="entry name" value="S4"/>
    <property type="match status" value="1"/>
</dbReference>
<dbReference type="SUPFAM" id="SSF55174">
    <property type="entry name" value="Alpha-L RNA-binding motif"/>
    <property type="match status" value="1"/>
</dbReference>
<dbReference type="PROSITE" id="PS00632">
    <property type="entry name" value="RIBOSOMAL_S4"/>
    <property type="match status" value="1"/>
</dbReference>
<dbReference type="PROSITE" id="PS50889">
    <property type="entry name" value="S4"/>
    <property type="match status" value="1"/>
</dbReference>
<gene>
    <name evidence="1" type="primary">rpsD</name>
    <name type="ordered locus">CBU_0262</name>
</gene>
<proteinExistence type="inferred from homology"/>